<name>PEBA_PROM2</name>
<sequence length="236" mass="28159">MFDSLVDFLKTNIDELNGHEVRISSEFKEHHNEDSKYIIKNWLFSSPEYRKWRITRLDGGKKLQVFNTVAYPNFDCEMPILGADILWFGTSQKLLAILDYQPLIQEGKYLEKYCSSLGIIKKKYSAFDNNKMKNIYDSKKYFSPWVIICRGNKLNLDRDLNNIFHSFVNNYLKIHKSNPVNQFLDTEKIKINQIKYDKYSFEKDPADKLFKSFFGEKWTKKFVNKFLFTLNNEIIY</sequence>
<proteinExistence type="inferred from homology"/>
<organism>
    <name type="scientific">Prochlorococcus marinus (strain MIT 9215)</name>
    <dbReference type="NCBI Taxonomy" id="93060"/>
    <lineage>
        <taxon>Bacteria</taxon>
        <taxon>Bacillati</taxon>
        <taxon>Cyanobacteriota</taxon>
        <taxon>Cyanophyceae</taxon>
        <taxon>Synechococcales</taxon>
        <taxon>Prochlorococcaceae</taxon>
        <taxon>Prochlorococcus</taxon>
    </lineage>
</organism>
<accession>A8G798</accession>
<gene>
    <name evidence="1" type="primary">pebA</name>
    <name type="ordered locus">P9215_18661</name>
</gene>
<dbReference type="EC" id="1.3.7.2" evidence="1"/>
<dbReference type="EMBL" id="CP000825">
    <property type="protein sequence ID" value="ABV51479.1"/>
    <property type="molecule type" value="Genomic_DNA"/>
</dbReference>
<dbReference type="RefSeq" id="WP_012008480.1">
    <property type="nucleotide sequence ID" value="NC_009840.1"/>
</dbReference>
<dbReference type="SMR" id="A8G798"/>
<dbReference type="STRING" id="93060.P9215_18661"/>
<dbReference type="KEGG" id="pmh:P9215_18661"/>
<dbReference type="eggNOG" id="ENOG502Z8J9">
    <property type="taxonomic scope" value="Bacteria"/>
</dbReference>
<dbReference type="HOGENOM" id="CLU_086208_0_0_3"/>
<dbReference type="OrthoDB" id="527390at2"/>
<dbReference type="Proteomes" id="UP000002014">
    <property type="component" value="Chromosome"/>
</dbReference>
<dbReference type="GO" id="GO:0050617">
    <property type="term" value="F:15,16-dihydrobiliverdin:ferredoxin oxidoreductase activity"/>
    <property type="evidence" value="ECO:0007669"/>
    <property type="project" value="UniProtKB-UniRule"/>
</dbReference>
<dbReference type="GO" id="GO:0050897">
    <property type="term" value="F:cobalt ion binding"/>
    <property type="evidence" value="ECO:0007669"/>
    <property type="project" value="InterPro"/>
</dbReference>
<dbReference type="GO" id="GO:0010024">
    <property type="term" value="P:phytochromobilin biosynthetic process"/>
    <property type="evidence" value="ECO:0007669"/>
    <property type="project" value="InterPro"/>
</dbReference>
<dbReference type="Gene3D" id="3.40.1500.20">
    <property type="match status" value="1"/>
</dbReference>
<dbReference type="HAMAP" id="MF_00792">
    <property type="entry name" value="PebA"/>
    <property type="match status" value="1"/>
</dbReference>
<dbReference type="InterPro" id="IPR023658">
    <property type="entry name" value="DiHydbiliverdin_OxRdtase"/>
</dbReference>
<dbReference type="InterPro" id="IPR009249">
    <property type="entry name" value="Ferredoxin-dep_bilin_Rdtase"/>
</dbReference>
<dbReference type="NCBIfam" id="NF009719">
    <property type="entry name" value="PRK13246.1"/>
    <property type="match status" value="1"/>
</dbReference>
<dbReference type="PANTHER" id="PTHR34557">
    <property type="entry name" value="PHYTOCHROMOBILIN:FERREDOXIN OXIDOREDUCTASE, CHLOROPLASTIC"/>
    <property type="match status" value="1"/>
</dbReference>
<dbReference type="PANTHER" id="PTHR34557:SF1">
    <property type="entry name" value="PHYTOCHROMOBILIN:FERREDOXIN OXIDOREDUCTASE, CHLOROPLASTIC"/>
    <property type="match status" value="1"/>
</dbReference>
<dbReference type="Pfam" id="PF05996">
    <property type="entry name" value="Fe_bilin_red"/>
    <property type="match status" value="1"/>
</dbReference>
<evidence type="ECO:0000255" key="1">
    <source>
        <dbReference type="HAMAP-Rule" id="MF_00792"/>
    </source>
</evidence>
<feature type="chain" id="PRO_1000062253" description="15,16-dihydrobiliverdin:ferredoxin oxidoreductase">
    <location>
        <begin position="1"/>
        <end position="236"/>
    </location>
</feature>
<comment type="function">
    <text evidence="1">Catalyzes the two-electron reduction of biliverdin IX-alpha at the C15 methine bridge.</text>
</comment>
<comment type="catalytic activity">
    <reaction evidence="1">
        <text>15,16-dihydrobiliverdin + oxidized 2[4Fe-4S]-[ferredoxin] = biliverdin IXalpha + reduced 2[4Fe-4S]-[ferredoxin] + 2 H(+)</text>
        <dbReference type="Rhea" id="RHEA:10168"/>
        <dbReference type="Rhea" id="RHEA-COMP:10002"/>
        <dbReference type="Rhea" id="RHEA-COMP:10004"/>
        <dbReference type="ChEBI" id="CHEBI:15378"/>
        <dbReference type="ChEBI" id="CHEBI:33722"/>
        <dbReference type="ChEBI" id="CHEBI:33723"/>
        <dbReference type="ChEBI" id="CHEBI:57899"/>
        <dbReference type="ChEBI" id="CHEBI:57991"/>
        <dbReference type="EC" id="1.3.7.2"/>
    </reaction>
</comment>
<comment type="similarity">
    <text evidence="1">Belongs to the HY2 family.</text>
</comment>
<reference key="1">
    <citation type="journal article" date="2007" name="PLoS Genet.">
        <title>Patterns and implications of gene gain and loss in the evolution of Prochlorococcus.</title>
        <authorList>
            <person name="Kettler G.C."/>
            <person name="Martiny A.C."/>
            <person name="Huang K."/>
            <person name="Zucker J."/>
            <person name="Coleman M.L."/>
            <person name="Rodrigue S."/>
            <person name="Chen F."/>
            <person name="Lapidus A."/>
            <person name="Ferriera S."/>
            <person name="Johnson J."/>
            <person name="Steglich C."/>
            <person name="Church G.M."/>
            <person name="Richardson P."/>
            <person name="Chisholm S.W."/>
        </authorList>
    </citation>
    <scope>NUCLEOTIDE SEQUENCE [LARGE SCALE GENOMIC DNA]</scope>
    <source>
        <strain>MIT 9215</strain>
    </source>
</reference>
<protein>
    <recommendedName>
        <fullName evidence="1">15,16-dihydrobiliverdin:ferredoxin oxidoreductase</fullName>
        <ecNumber evidence="1">1.3.7.2</ecNumber>
    </recommendedName>
</protein>
<keyword id="KW-0560">Oxidoreductase</keyword>